<name>HOA2_NOCFA</name>
<sequence>MSTPTRTVTLVDTTLRDGMSSVSHRFTPNDVAAIAAGLDRAGVRTIEVAHGIGLGASSIQYGFAAATDPEYVRAAVDAVDHADIAVLYVPGIATLAELRAAVEAGIRTVRVAVHCTEADCAQQPVEWAKDHGLTVMTFLMMSHKLDPEPLAEQAVKLESYGADVVYVVDSAGAMVPRHAGDRVAALRRAISAEIGFHAHNNLGVGIANALTAAENGATFIDGSLRGLGASAGNAQTEVLAAAFERAGWHTGVELFPLIDTAEQVVAPLMTEPQIVDETALVLGYAGVYSTFFHPTKRAAAKFGVPTRDILLELGRRGVIGGQEDMIVDVASELAGRTYDLPARAGI</sequence>
<gene>
    <name type="ordered locus">NFA_30510</name>
</gene>
<evidence type="ECO:0000255" key="1">
    <source>
        <dbReference type="HAMAP-Rule" id="MF_01656"/>
    </source>
</evidence>
<organism>
    <name type="scientific">Nocardia farcinica (strain IFM 10152)</name>
    <dbReference type="NCBI Taxonomy" id="247156"/>
    <lineage>
        <taxon>Bacteria</taxon>
        <taxon>Bacillati</taxon>
        <taxon>Actinomycetota</taxon>
        <taxon>Actinomycetes</taxon>
        <taxon>Mycobacteriales</taxon>
        <taxon>Nocardiaceae</taxon>
        <taxon>Nocardia</taxon>
    </lineage>
</organism>
<feature type="chain" id="PRO_0000387870" description="4-hydroxy-2-oxovalerate aldolase 2">
    <location>
        <begin position="1"/>
        <end position="346"/>
    </location>
</feature>
<feature type="domain" description="Pyruvate carboxyltransferase" evidence="1">
    <location>
        <begin position="8"/>
        <end position="258"/>
    </location>
</feature>
<feature type="binding site" evidence="1">
    <location>
        <begin position="16"/>
        <end position="17"/>
    </location>
    <ligand>
        <name>substrate</name>
    </ligand>
</feature>
<feature type="binding site" evidence="1">
    <location>
        <position position="17"/>
    </location>
    <ligand>
        <name>Mn(2+)</name>
        <dbReference type="ChEBI" id="CHEBI:29035"/>
    </ligand>
</feature>
<feature type="binding site" evidence="1">
    <location>
        <position position="170"/>
    </location>
    <ligand>
        <name>substrate</name>
    </ligand>
</feature>
<feature type="binding site" evidence="1">
    <location>
        <position position="197"/>
    </location>
    <ligand>
        <name>Mn(2+)</name>
        <dbReference type="ChEBI" id="CHEBI:29035"/>
    </ligand>
</feature>
<feature type="binding site" evidence="1">
    <location>
        <position position="197"/>
    </location>
    <ligand>
        <name>substrate</name>
    </ligand>
</feature>
<feature type="binding site" evidence="1">
    <location>
        <position position="199"/>
    </location>
    <ligand>
        <name>Mn(2+)</name>
        <dbReference type="ChEBI" id="CHEBI:29035"/>
    </ligand>
</feature>
<feature type="binding site" evidence="1">
    <location>
        <position position="288"/>
    </location>
    <ligand>
        <name>substrate</name>
    </ligand>
</feature>
<feature type="site" description="Transition state stabilizer" evidence="1">
    <location>
        <position position="16"/>
    </location>
</feature>
<comment type="catalytic activity">
    <reaction evidence="1">
        <text>(S)-4-hydroxy-2-oxopentanoate = acetaldehyde + pyruvate</text>
        <dbReference type="Rhea" id="RHEA:22624"/>
        <dbReference type="ChEBI" id="CHEBI:15343"/>
        <dbReference type="ChEBI" id="CHEBI:15361"/>
        <dbReference type="ChEBI" id="CHEBI:73143"/>
        <dbReference type="EC" id="4.1.3.39"/>
    </reaction>
</comment>
<comment type="similarity">
    <text evidence="1">Belongs to the 4-hydroxy-2-oxovalerate aldolase family.</text>
</comment>
<keyword id="KW-0058">Aromatic hydrocarbons catabolism</keyword>
<keyword id="KW-0456">Lyase</keyword>
<keyword id="KW-0464">Manganese</keyword>
<keyword id="KW-0479">Metal-binding</keyword>
<keyword id="KW-1185">Reference proteome</keyword>
<reference key="1">
    <citation type="journal article" date="2004" name="Proc. Natl. Acad. Sci. U.S.A.">
        <title>The complete genomic sequence of Nocardia farcinica IFM 10152.</title>
        <authorList>
            <person name="Ishikawa J."/>
            <person name="Yamashita A."/>
            <person name="Mikami Y."/>
            <person name="Hoshino Y."/>
            <person name="Kurita H."/>
            <person name="Hotta K."/>
            <person name="Shiba T."/>
            <person name="Hattori M."/>
        </authorList>
    </citation>
    <scope>NUCLEOTIDE SEQUENCE [LARGE SCALE GENOMIC DNA]</scope>
    <source>
        <strain>IFM 10152</strain>
    </source>
</reference>
<protein>
    <recommendedName>
        <fullName evidence="1">4-hydroxy-2-oxovalerate aldolase 2</fullName>
        <shortName evidence="1">HOA 2</shortName>
        <ecNumber evidence="1">4.1.3.39</ecNumber>
    </recommendedName>
    <alternativeName>
        <fullName evidence="1">4-hydroxy-2-keto-pentanoic acid aldolase 2</fullName>
    </alternativeName>
    <alternativeName>
        <fullName evidence="1">4-hydroxy-2-oxopentanoate aldolase 2</fullName>
    </alternativeName>
</protein>
<dbReference type="EC" id="4.1.3.39" evidence="1"/>
<dbReference type="EMBL" id="AP006618">
    <property type="protein sequence ID" value="BAD57898.1"/>
    <property type="molecule type" value="Genomic_DNA"/>
</dbReference>
<dbReference type="RefSeq" id="WP_011209583.1">
    <property type="nucleotide sequence ID" value="NC_006361.1"/>
</dbReference>
<dbReference type="SMR" id="Q5YV93"/>
<dbReference type="STRING" id="247156.NFA_30510"/>
<dbReference type="GeneID" id="61133768"/>
<dbReference type="KEGG" id="nfa:NFA_30510"/>
<dbReference type="eggNOG" id="COG0119">
    <property type="taxonomic scope" value="Bacteria"/>
</dbReference>
<dbReference type="HOGENOM" id="CLU_049173_0_0_11"/>
<dbReference type="OrthoDB" id="9803573at2"/>
<dbReference type="Proteomes" id="UP000006820">
    <property type="component" value="Chromosome"/>
</dbReference>
<dbReference type="GO" id="GO:0003852">
    <property type="term" value="F:2-isopropylmalate synthase activity"/>
    <property type="evidence" value="ECO:0007669"/>
    <property type="project" value="TreeGrafter"/>
</dbReference>
<dbReference type="GO" id="GO:0008701">
    <property type="term" value="F:4-hydroxy-2-oxovalerate aldolase activity"/>
    <property type="evidence" value="ECO:0007669"/>
    <property type="project" value="UniProtKB-UniRule"/>
</dbReference>
<dbReference type="GO" id="GO:0030145">
    <property type="term" value="F:manganese ion binding"/>
    <property type="evidence" value="ECO:0007669"/>
    <property type="project" value="UniProtKB-UniRule"/>
</dbReference>
<dbReference type="GO" id="GO:0009056">
    <property type="term" value="P:catabolic process"/>
    <property type="evidence" value="ECO:0007669"/>
    <property type="project" value="UniProtKB-KW"/>
</dbReference>
<dbReference type="GO" id="GO:0009098">
    <property type="term" value="P:L-leucine biosynthetic process"/>
    <property type="evidence" value="ECO:0007669"/>
    <property type="project" value="TreeGrafter"/>
</dbReference>
<dbReference type="CDD" id="cd07943">
    <property type="entry name" value="DRE_TIM_HOA"/>
    <property type="match status" value="1"/>
</dbReference>
<dbReference type="Gene3D" id="1.10.8.60">
    <property type="match status" value="1"/>
</dbReference>
<dbReference type="Gene3D" id="3.20.20.70">
    <property type="entry name" value="Aldolase class I"/>
    <property type="match status" value="1"/>
</dbReference>
<dbReference type="HAMAP" id="MF_01656">
    <property type="entry name" value="HOA"/>
    <property type="match status" value="1"/>
</dbReference>
<dbReference type="InterPro" id="IPR050073">
    <property type="entry name" value="2-IPM_HCS-like"/>
</dbReference>
<dbReference type="InterPro" id="IPR017629">
    <property type="entry name" value="4OH_2_O-val_aldolase"/>
</dbReference>
<dbReference type="InterPro" id="IPR013785">
    <property type="entry name" value="Aldolase_TIM"/>
</dbReference>
<dbReference type="InterPro" id="IPR012425">
    <property type="entry name" value="DmpG_comm"/>
</dbReference>
<dbReference type="InterPro" id="IPR035685">
    <property type="entry name" value="DRE_TIM_HOA"/>
</dbReference>
<dbReference type="InterPro" id="IPR000891">
    <property type="entry name" value="PYR_CT"/>
</dbReference>
<dbReference type="NCBIfam" id="TIGR03217">
    <property type="entry name" value="4OH_2_O_val_ald"/>
    <property type="match status" value="1"/>
</dbReference>
<dbReference type="NCBIfam" id="NF006049">
    <property type="entry name" value="PRK08195.1"/>
    <property type="match status" value="1"/>
</dbReference>
<dbReference type="PANTHER" id="PTHR10277:SF9">
    <property type="entry name" value="2-ISOPROPYLMALATE SYNTHASE 1, CHLOROPLASTIC-RELATED"/>
    <property type="match status" value="1"/>
</dbReference>
<dbReference type="PANTHER" id="PTHR10277">
    <property type="entry name" value="HOMOCITRATE SYNTHASE-RELATED"/>
    <property type="match status" value="1"/>
</dbReference>
<dbReference type="Pfam" id="PF07836">
    <property type="entry name" value="DmpG_comm"/>
    <property type="match status" value="1"/>
</dbReference>
<dbReference type="Pfam" id="PF00682">
    <property type="entry name" value="HMGL-like"/>
    <property type="match status" value="1"/>
</dbReference>
<dbReference type="SUPFAM" id="SSF51569">
    <property type="entry name" value="Aldolase"/>
    <property type="match status" value="1"/>
</dbReference>
<dbReference type="SUPFAM" id="SSF89000">
    <property type="entry name" value="post-HMGL domain-like"/>
    <property type="match status" value="1"/>
</dbReference>
<dbReference type="PROSITE" id="PS50991">
    <property type="entry name" value="PYR_CT"/>
    <property type="match status" value="1"/>
</dbReference>
<proteinExistence type="inferred from homology"/>
<accession>Q5YV93</accession>